<accession>Q9JKF1</accession>
<accession>G3UW45</accession>
<keyword id="KW-0007">Acetylation</keyword>
<keyword id="KW-0112">Calmodulin-binding</keyword>
<keyword id="KW-1003">Cell membrane</keyword>
<keyword id="KW-0963">Cytoplasm</keyword>
<keyword id="KW-0472">Membrane</keyword>
<keyword id="KW-0539">Nucleus</keyword>
<keyword id="KW-0597">Phosphoprotein</keyword>
<keyword id="KW-1185">Reference proteome</keyword>
<keyword id="KW-0677">Repeat</keyword>
<feature type="initiator methionine" description="Removed" evidence="1">
    <location>
        <position position="1"/>
    </location>
</feature>
<feature type="chain" id="PRO_0000056649" description="Ras GTPase-activating-like protein IQGAP1">
    <location>
        <begin position="2"/>
        <end position="1657"/>
    </location>
</feature>
<feature type="domain" description="Calponin-homology (CH)" evidence="2">
    <location>
        <begin position="44"/>
        <end position="159"/>
    </location>
</feature>
<feature type="domain" description="WW">
    <location>
        <begin position="685"/>
        <end position="710"/>
    </location>
</feature>
<feature type="domain" description="IQ 1" evidence="3">
    <location>
        <begin position="745"/>
        <end position="774"/>
    </location>
</feature>
<feature type="domain" description="IQ 2" evidence="3">
    <location>
        <begin position="775"/>
        <end position="804"/>
    </location>
</feature>
<feature type="domain" description="IQ 3" evidence="3">
    <location>
        <begin position="805"/>
        <end position="834"/>
    </location>
</feature>
<feature type="domain" description="IQ 4" evidence="3">
    <location>
        <begin position="835"/>
        <end position="864"/>
    </location>
</feature>
<feature type="domain" description="Ras-GAP" evidence="4">
    <location>
        <begin position="1020"/>
        <end position="1269"/>
    </location>
</feature>
<feature type="region of interest" description="C1">
    <location>
        <begin position="956"/>
        <end position="1274"/>
    </location>
</feature>
<feature type="region of interest" description="C2">
    <location>
        <begin position="1276"/>
        <end position="1657"/>
    </location>
</feature>
<feature type="modified residue" description="N-acetylserine" evidence="1">
    <location>
        <position position="2"/>
    </location>
</feature>
<feature type="modified residue" description="Phosphoserine" evidence="1">
    <location>
        <position position="2"/>
    </location>
</feature>
<feature type="modified residue" description="Phosphotyrosine" evidence="13">
    <location>
        <position position="172"/>
    </location>
</feature>
<feature type="modified residue" description="Phosphoserine" evidence="1">
    <location>
        <position position="330"/>
    </location>
</feature>
<feature type="modified residue" description="Phosphoserine" evidence="1">
    <location>
        <position position="1441"/>
    </location>
</feature>
<feature type="sequence conflict" description="In Ref. 1; AAF60344." evidence="12" ref="1">
    <original>V</original>
    <variation>L</variation>
    <location>
        <position position="1268"/>
    </location>
</feature>
<evidence type="ECO:0000250" key="1">
    <source>
        <dbReference type="UniProtKB" id="P46940"/>
    </source>
</evidence>
<evidence type="ECO:0000255" key="2">
    <source>
        <dbReference type="PROSITE-ProRule" id="PRU00044"/>
    </source>
</evidence>
<evidence type="ECO:0000255" key="3">
    <source>
        <dbReference type="PROSITE-ProRule" id="PRU00116"/>
    </source>
</evidence>
<evidence type="ECO:0000255" key="4">
    <source>
        <dbReference type="PROSITE-ProRule" id="PRU00167"/>
    </source>
</evidence>
<evidence type="ECO:0000269" key="5">
    <source>
    </source>
</evidence>
<evidence type="ECO:0000269" key="6">
    <source>
    </source>
</evidence>
<evidence type="ECO:0000269" key="7">
    <source>
    </source>
</evidence>
<evidence type="ECO:0000269" key="8">
    <source>
    </source>
</evidence>
<evidence type="ECO:0000269" key="9">
    <source>
    </source>
</evidence>
<evidence type="ECO:0000269" key="10">
    <source>
    </source>
</evidence>
<evidence type="ECO:0000269" key="11">
    <source>
    </source>
</evidence>
<evidence type="ECO:0000305" key="12"/>
<evidence type="ECO:0007744" key="13">
    <source>
    </source>
</evidence>
<organism>
    <name type="scientific">Mus musculus</name>
    <name type="common">Mouse</name>
    <dbReference type="NCBI Taxonomy" id="10090"/>
    <lineage>
        <taxon>Eukaryota</taxon>
        <taxon>Metazoa</taxon>
        <taxon>Chordata</taxon>
        <taxon>Craniata</taxon>
        <taxon>Vertebrata</taxon>
        <taxon>Euteleostomi</taxon>
        <taxon>Mammalia</taxon>
        <taxon>Eutheria</taxon>
        <taxon>Euarchontoglires</taxon>
        <taxon>Glires</taxon>
        <taxon>Rodentia</taxon>
        <taxon>Myomorpha</taxon>
        <taxon>Muroidea</taxon>
        <taxon>Muridae</taxon>
        <taxon>Murinae</taxon>
        <taxon>Mus</taxon>
        <taxon>Mus</taxon>
    </lineage>
</organism>
<dbReference type="EMBL" id="AF240630">
    <property type="protein sequence ID" value="AAF60344.1"/>
    <property type="molecule type" value="mRNA"/>
</dbReference>
<dbReference type="EMBL" id="AC109257">
    <property type="status" value="NOT_ANNOTATED_CDS"/>
    <property type="molecule type" value="Genomic_DNA"/>
</dbReference>
<dbReference type="EMBL" id="AC127594">
    <property type="status" value="NOT_ANNOTATED_CDS"/>
    <property type="molecule type" value="Genomic_DNA"/>
</dbReference>
<dbReference type="EMBL" id="CH466543">
    <property type="protein sequence ID" value="EDL06977.1"/>
    <property type="molecule type" value="Genomic_DNA"/>
</dbReference>
<dbReference type="CCDS" id="CCDS40001.1"/>
<dbReference type="RefSeq" id="NP_057930.2">
    <property type="nucleotide sequence ID" value="NM_016721.2"/>
</dbReference>
<dbReference type="BMRB" id="Q9JKF1"/>
<dbReference type="SMR" id="Q9JKF1"/>
<dbReference type="BioGRID" id="205938">
    <property type="interactions" value="80"/>
</dbReference>
<dbReference type="CORUM" id="Q9JKF1"/>
<dbReference type="FunCoup" id="Q9JKF1">
    <property type="interactions" value="1507"/>
</dbReference>
<dbReference type="IntAct" id="Q9JKF1">
    <property type="interactions" value="16"/>
</dbReference>
<dbReference type="MINT" id="Q9JKF1"/>
<dbReference type="STRING" id="10090.ENSMUSP00000128278"/>
<dbReference type="GlyGen" id="Q9JKF1">
    <property type="glycosylation" value="2 sites, 1 O-linked glycan (1 site)"/>
</dbReference>
<dbReference type="iPTMnet" id="Q9JKF1"/>
<dbReference type="MetOSite" id="Q9JKF1"/>
<dbReference type="PhosphoSitePlus" id="Q9JKF1"/>
<dbReference type="SwissPalm" id="Q9JKF1"/>
<dbReference type="CPTAC" id="non-CPTAC-3584"/>
<dbReference type="jPOST" id="Q9JKF1"/>
<dbReference type="PaxDb" id="10090-ENSMUSP00000128278"/>
<dbReference type="PeptideAtlas" id="Q9JKF1"/>
<dbReference type="ProteomicsDB" id="301668"/>
<dbReference type="Pumba" id="Q9JKF1"/>
<dbReference type="Antibodypedia" id="2891">
    <property type="antibodies" value="432 antibodies from 40 providers"/>
</dbReference>
<dbReference type="DNASU" id="29875"/>
<dbReference type="Ensembl" id="ENSMUST00000167377.3">
    <property type="protein sequence ID" value="ENSMUSP00000128278.2"/>
    <property type="gene ID" value="ENSMUSG00000030536.11"/>
</dbReference>
<dbReference type="GeneID" id="29875"/>
<dbReference type="KEGG" id="mmu:29875"/>
<dbReference type="UCSC" id="uc009ibc.2">
    <property type="organism name" value="mouse"/>
</dbReference>
<dbReference type="AGR" id="MGI:1352757"/>
<dbReference type="CTD" id="8826"/>
<dbReference type="MGI" id="MGI:1352757">
    <property type="gene designation" value="Iqgap1"/>
</dbReference>
<dbReference type="VEuPathDB" id="HostDB:ENSMUSG00000030536"/>
<dbReference type="eggNOG" id="KOG2128">
    <property type="taxonomic scope" value="Eukaryota"/>
</dbReference>
<dbReference type="GeneTree" id="ENSGT00950000183076"/>
<dbReference type="HOGENOM" id="CLU_000972_2_1_1"/>
<dbReference type="InParanoid" id="Q9JKF1"/>
<dbReference type="OMA" id="KGVLVHW"/>
<dbReference type="OrthoDB" id="775356at2759"/>
<dbReference type="PhylomeDB" id="Q9JKF1"/>
<dbReference type="TreeFam" id="TF313078"/>
<dbReference type="Reactome" id="R-MMU-373753">
    <property type="pathway name" value="Nephrin family interactions"/>
</dbReference>
<dbReference type="Reactome" id="R-MMU-5626467">
    <property type="pathway name" value="RHO GTPases activate IQGAPs"/>
</dbReference>
<dbReference type="Reactome" id="R-MMU-5674135">
    <property type="pathway name" value="MAP2K and MAPK activation"/>
</dbReference>
<dbReference type="Reactome" id="R-MMU-6798695">
    <property type="pathway name" value="Neutrophil degranulation"/>
</dbReference>
<dbReference type="Reactome" id="R-MMU-8980692">
    <property type="pathway name" value="RHOA GTPase cycle"/>
</dbReference>
<dbReference type="Reactome" id="R-MMU-9013106">
    <property type="pathway name" value="RHOC GTPase cycle"/>
</dbReference>
<dbReference type="Reactome" id="R-MMU-9013149">
    <property type="pathway name" value="RAC1 GTPase cycle"/>
</dbReference>
<dbReference type="Reactome" id="R-MMU-9013404">
    <property type="pathway name" value="RAC2 GTPase cycle"/>
</dbReference>
<dbReference type="Reactome" id="R-MMU-9013406">
    <property type="pathway name" value="RHOQ GTPase cycle"/>
</dbReference>
<dbReference type="Reactome" id="R-MMU-9013420">
    <property type="pathway name" value="RHOU GTPase cycle"/>
</dbReference>
<dbReference type="Reactome" id="R-MMU-9013424">
    <property type="pathway name" value="RHOV GTPase cycle"/>
</dbReference>
<dbReference type="BioGRID-ORCS" id="29875">
    <property type="hits" value="4 hits in 80 CRISPR screens"/>
</dbReference>
<dbReference type="ChiTaRS" id="Iqgap1">
    <property type="organism name" value="mouse"/>
</dbReference>
<dbReference type="PRO" id="PR:Q9JKF1"/>
<dbReference type="Proteomes" id="UP000000589">
    <property type="component" value="Chromosome 7"/>
</dbReference>
<dbReference type="RNAct" id="Q9JKF1">
    <property type="molecule type" value="protein"/>
</dbReference>
<dbReference type="Bgee" id="ENSMUSG00000030536">
    <property type="expression patterns" value="Expressed in left lung lobe and 273 other cell types or tissues"/>
</dbReference>
<dbReference type="ExpressionAtlas" id="Q9JKF1">
    <property type="expression patterns" value="baseline and differential"/>
</dbReference>
<dbReference type="GO" id="GO:0016324">
    <property type="term" value="C:apical plasma membrane"/>
    <property type="evidence" value="ECO:0000314"/>
    <property type="project" value="UniProtKB"/>
</dbReference>
<dbReference type="GO" id="GO:0030424">
    <property type="term" value="C:axon"/>
    <property type="evidence" value="ECO:0000250"/>
    <property type="project" value="UniProtKB"/>
</dbReference>
<dbReference type="GO" id="GO:0016323">
    <property type="term" value="C:basolateral plasma membrane"/>
    <property type="evidence" value="ECO:0000314"/>
    <property type="project" value="UniProtKB"/>
</dbReference>
<dbReference type="GO" id="GO:0031252">
    <property type="term" value="C:cell leading edge"/>
    <property type="evidence" value="ECO:0000314"/>
    <property type="project" value="MGI"/>
</dbReference>
<dbReference type="GO" id="GO:0005911">
    <property type="term" value="C:cell-cell junction"/>
    <property type="evidence" value="ECO:0000314"/>
    <property type="project" value="MGI"/>
</dbReference>
<dbReference type="GO" id="GO:0030864">
    <property type="term" value="C:cortical actin cytoskeleton"/>
    <property type="evidence" value="ECO:0000353"/>
    <property type="project" value="MGI"/>
</dbReference>
<dbReference type="GO" id="GO:0005737">
    <property type="term" value="C:cytoplasm"/>
    <property type="evidence" value="ECO:0000314"/>
    <property type="project" value="MGI"/>
</dbReference>
<dbReference type="GO" id="GO:0036464">
    <property type="term" value="C:cytoplasmic ribonucleoprotein granule"/>
    <property type="evidence" value="ECO:0007669"/>
    <property type="project" value="Ensembl"/>
</dbReference>
<dbReference type="GO" id="GO:0009898">
    <property type="term" value="C:cytoplasmic side of plasma membrane"/>
    <property type="evidence" value="ECO:0000250"/>
    <property type="project" value="UniProtKB"/>
</dbReference>
<dbReference type="GO" id="GO:0005925">
    <property type="term" value="C:focal adhesion"/>
    <property type="evidence" value="ECO:0000314"/>
    <property type="project" value="MGI"/>
</dbReference>
<dbReference type="GO" id="GO:0030426">
    <property type="term" value="C:growth cone"/>
    <property type="evidence" value="ECO:0000250"/>
    <property type="project" value="UniProtKB"/>
</dbReference>
<dbReference type="GO" id="GO:0016328">
    <property type="term" value="C:lateral plasma membrane"/>
    <property type="evidence" value="ECO:0000314"/>
    <property type="project" value="MGI"/>
</dbReference>
<dbReference type="GO" id="GO:0005874">
    <property type="term" value="C:microtubule"/>
    <property type="evidence" value="ECO:0007669"/>
    <property type="project" value="Ensembl"/>
</dbReference>
<dbReference type="GO" id="GO:0030496">
    <property type="term" value="C:midbody"/>
    <property type="evidence" value="ECO:0007669"/>
    <property type="project" value="Ensembl"/>
</dbReference>
<dbReference type="GO" id="GO:0043005">
    <property type="term" value="C:neuron projection"/>
    <property type="evidence" value="ECO:0000316"/>
    <property type="project" value="MGI"/>
</dbReference>
<dbReference type="GO" id="GO:0005634">
    <property type="term" value="C:nucleus"/>
    <property type="evidence" value="ECO:0000314"/>
    <property type="project" value="UniProtKB"/>
</dbReference>
<dbReference type="GO" id="GO:0005886">
    <property type="term" value="C:plasma membrane"/>
    <property type="evidence" value="ECO:0000250"/>
    <property type="project" value="UniProtKB"/>
</dbReference>
<dbReference type="GO" id="GO:0098794">
    <property type="term" value="C:postsynapse"/>
    <property type="evidence" value="ECO:0007669"/>
    <property type="project" value="Ensembl"/>
</dbReference>
<dbReference type="GO" id="GO:1990904">
    <property type="term" value="C:ribonucleoprotein complex"/>
    <property type="evidence" value="ECO:0000314"/>
    <property type="project" value="MGI"/>
</dbReference>
<dbReference type="GO" id="GO:0001726">
    <property type="term" value="C:ruffle"/>
    <property type="evidence" value="ECO:0007669"/>
    <property type="project" value="Ensembl"/>
</dbReference>
<dbReference type="GO" id="GO:0036057">
    <property type="term" value="C:slit diaphragm"/>
    <property type="evidence" value="ECO:0000250"/>
    <property type="project" value="UniProtKB"/>
</dbReference>
<dbReference type="GO" id="GO:0005509">
    <property type="term" value="F:calcium ion binding"/>
    <property type="evidence" value="ECO:0007669"/>
    <property type="project" value="Ensembl"/>
</dbReference>
<dbReference type="GO" id="GO:0005516">
    <property type="term" value="F:calmodulin binding"/>
    <property type="evidence" value="ECO:0007669"/>
    <property type="project" value="UniProtKB-KW"/>
</dbReference>
<dbReference type="GO" id="GO:0005078">
    <property type="term" value="F:MAP-kinase scaffold activity"/>
    <property type="evidence" value="ECO:0007669"/>
    <property type="project" value="Ensembl"/>
</dbReference>
<dbReference type="GO" id="GO:0051019">
    <property type="term" value="F:mitogen-activated protein kinase binding"/>
    <property type="evidence" value="ECO:0007669"/>
    <property type="project" value="Ensembl"/>
</dbReference>
<dbReference type="GO" id="GO:0005547">
    <property type="term" value="F:phosphatidylinositol-3,4,5-trisphosphate binding"/>
    <property type="evidence" value="ECO:0000250"/>
    <property type="project" value="UniProtKB"/>
</dbReference>
<dbReference type="GO" id="GO:0019904">
    <property type="term" value="F:protein domain specific binding"/>
    <property type="evidence" value="ECO:0007669"/>
    <property type="project" value="Ensembl"/>
</dbReference>
<dbReference type="GO" id="GO:0019903">
    <property type="term" value="F:protein phosphatase binding"/>
    <property type="evidence" value="ECO:0007669"/>
    <property type="project" value="Ensembl"/>
</dbReference>
<dbReference type="GO" id="GO:0043539">
    <property type="term" value="F:protein serine/threonine kinase activator activity"/>
    <property type="evidence" value="ECO:0007669"/>
    <property type="project" value="Ensembl"/>
</dbReference>
<dbReference type="GO" id="GO:0044877">
    <property type="term" value="F:protein-containing complex binding"/>
    <property type="evidence" value="ECO:0007669"/>
    <property type="project" value="Ensembl"/>
</dbReference>
<dbReference type="GO" id="GO:0044548">
    <property type="term" value="F:S100 protein binding"/>
    <property type="evidence" value="ECO:0007669"/>
    <property type="project" value="Ensembl"/>
</dbReference>
<dbReference type="GO" id="GO:0031267">
    <property type="term" value="F:small GTPase binding"/>
    <property type="evidence" value="ECO:0000353"/>
    <property type="project" value="MGI"/>
</dbReference>
<dbReference type="GO" id="GO:0070836">
    <property type="term" value="P:caveola assembly"/>
    <property type="evidence" value="ECO:0000315"/>
    <property type="project" value="UniProtKB"/>
</dbReference>
<dbReference type="GO" id="GO:0071277">
    <property type="term" value="P:cellular response to calcium ion"/>
    <property type="evidence" value="ECO:0007669"/>
    <property type="project" value="Ensembl"/>
</dbReference>
<dbReference type="GO" id="GO:0071364">
    <property type="term" value="P:cellular response to epidermal growth factor stimulus"/>
    <property type="evidence" value="ECO:0000315"/>
    <property type="project" value="BHF-UCL"/>
</dbReference>
<dbReference type="GO" id="GO:0044344">
    <property type="term" value="P:cellular response to fibroblast growth factor stimulus"/>
    <property type="evidence" value="ECO:0000315"/>
    <property type="project" value="BHF-UCL"/>
</dbReference>
<dbReference type="GO" id="GO:0036120">
    <property type="term" value="P:cellular response to platelet-derived growth factor stimulus"/>
    <property type="evidence" value="ECO:0000315"/>
    <property type="project" value="BHF-UCL"/>
</dbReference>
<dbReference type="GO" id="GO:0007173">
    <property type="term" value="P:epidermal growth factor receptor signaling pathway"/>
    <property type="evidence" value="ECO:0000315"/>
    <property type="project" value="BHF-UCL"/>
</dbReference>
<dbReference type="GO" id="GO:0008543">
    <property type="term" value="P:fibroblast growth factor receptor signaling pathway"/>
    <property type="evidence" value="ECO:0000315"/>
    <property type="project" value="BHF-UCL"/>
</dbReference>
<dbReference type="GO" id="GO:0010761">
    <property type="term" value="P:fibroblast migration"/>
    <property type="evidence" value="ECO:0000316"/>
    <property type="project" value="MGI"/>
</dbReference>
<dbReference type="GO" id="GO:0035305">
    <property type="term" value="P:negative regulation of dephosphorylation"/>
    <property type="evidence" value="ECO:0000316"/>
    <property type="project" value="MGI"/>
</dbReference>
<dbReference type="GO" id="GO:1990138">
    <property type="term" value="P:neuron projection extension"/>
    <property type="evidence" value="ECO:0007669"/>
    <property type="project" value="Ensembl"/>
</dbReference>
<dbReference type="GO" id="GO:0048008">
    <property type="term" value="P:platelet-derived growth factor receptor signaling pathway"/>
    <property type="evidence" value="ECO:0000315"/>
    <property type="project" value="BHF-UCL"/>
</dbReference>
<dbReference type="GO" id="GO:0072015">
    <property type="term" value="P:podocyte development"/>
    <property type="evidence" value="ECO:0000250"/>
    <property type="project" value="UniProtKB"/>
</dbReference>
<dbReference type="GO" id="GO:1900006">
    <property type="term" value="P:positive regulation of dendrite development"/>
    <property type="evidence" value="ECO:0007669"/>
    <property type="project" value="Ensembl"/>
</dbReference>
<dbReference type="GO" id="GO:0051894">
    <property type="term" value="P:positive regulation of focal adhesion assembly"/>
    <property type="evidence" value="ECO:0007669"/>
    <property type="project" value="Ensembl"/>
</dbReference>
<dbReference type="GO" id="GO:0043410">
    <property type="term" value="P:positive regulation of MAPK cascade"/>
    <property type="evidence" value="ECO:0007669"/>
    <property type="project" value="Ensembl"/>
</dbReference>
<dbReference type="GO" id="GO:1903829">
    <property type="term" value="P:positive regulation of protein localization"/>
    <property type="evidence" value="ECO:0007669"/>
    <property type="project" value="Ensembl"/>
</dbReference>
<dbReference type="GO" id="GO:1904754">
    <property type="term" value="P:positive regulation of vascular associated smooth muscle cell migration"/>
    <property type="evidence" value="ECO:0007669"/>
    <property type="project" value="Ensembl"/>
</dbReference>
<dbReference type="GO" id="GO:0001817">
    <property type="term" value="P:regulation of cytokine production"/>
    <property type="evidence" value="ECO:0000315"/>
    <property type="project" value="MGI"/>
</dbReference>
<dbReference type="GO" id="GO:0007346">
    <property type="term" value="P:regulation of mitotic cell cycle"/>
    <property type="evidence" value="ECO:0000250"/>
    <property type="project" value="UniProtKB"/>
</dbReference>
<dbReference type="GO" id="GO:0150052">
    <property type="term" value="P:regulation of postsynapse assembly"/>
    <property type="evidence" value="ECO:0007669"/>
    <property type="project" value="Ensembl"/>
</dbReference>
<dbReference type="GO" id="GO:1990776">
    <property type="term" value="P:response to angiotensin"/>
    <property type="evidence" value="ECO:0007669"/>
    <property type="project" value="Ensembl"/>
</dbReference>
<dbReference type="CDD" id="cd21274">
    <property type="entry name" value="CH_IQGAP1"/>
    <property type="match status" value="1"/>
</dbReference>
<dbReference type="CDD" id="cd05133">
    <property type="entry name" value="RasGAP_IQGAP1"/>
    <property type="match status" value="1"/>
</dbReference>
<dbReference type="CDD" id="cd00201">
    <property type="entry name" value="WW"/>
    <property type="match status" value="1"/>
</dbReference>
<dbReference type="FunFam" id="1.10.418.10:FF:000013">
    <property type="entry name" value="IQ motif containing GTPase activating protein 1"/>
    <property type="match status" value="1"/>
</dbReference>
<dbReference type="FunFam" id="1.10.506.10:FF:000004">
    <property type="entry name" value="IQ motif containing GTPase activating protein 1"/>
    <property type="match status" value="1"/>
</dbReference>
<dbReference type="FunFam" id="1.20.5.190:FF:000005">
    <property type="entry name" value="IQ motif containing GTPase activating protein 1"/>
    <property type="match status" value="1"/>
</dbReference>
<dbReference type="FunFam" id="2.20.70.10:FF:000062">
    <property type="entry name" value="IQ motif containing GTPase activating protein 1"/>
    <property type="match status" value="1"/>
</dbReference>
<dbReference type="FunFam" id="4.10.270.10:FF:000003">
    <property type="entry name" value="IQ motif containing GTPase activating protein 1"/>
    <property type="match status" value="1"/>
</dbReference>
<dbReference type="Gene3D" id="1.20.5.190">
    <property type="match status" value="1"/>
</dbReference>
<dbReference type="Gene3D" id="1.10.418.10">
    <property type="entry name" value="Calponin-like domain"/>
    <property type="match status" value="1"/>
</dbReference>
<dbReference type="Gene3D" id="1.10.506.10">
    <property type="entry name" value="GTPase Activation - p120gap, domain 1"/>
    <property type="match status" value="1"/>
</dbReference>
<dbReference type="Gene3D" id="4.10.270.10">
    <property type="entry name" value="Myosin, subunit A"/>
    <property type="match status" value="1"/>
</dbReference>
<dbReference type="InterPro" id="IPR001715">
    <property type="entry name" value="CH_dom"/>
</dbReference>
<dbReference type="InterPro" id="IPR036872">
    <property type="entry name" value="CH_dom_sf"/>
</dbReference>
<dbReference type="InterPro" id="IPR000048">
    <property type="entry name" value="IQ_motif_EF-hand-BS"/>
</dbReference>
<dbReference type="InterPro" id="IPR027417">
    <property type="entry name" value="P-loop_NTPase"/>
</dbReference>
<dbReference type="InterPro" id="IPR000593">
    <property type="entry name" value="RasGAP_C"/>
</dbReference>
<dbReference type="InterPro" id="IPR023152">
    <property type="entry name" value="RasGAP_CS"/>
</dbReference>
<dbReference type="InterPro" id="IPR001936">
    <property type="entry name" value="RasGAP_dom"/>
</dbReference>
<dbReference type="InterPro" id="IPR008936">
    <property type="entry name" value="Rho_GTPase_activation_prot"/>
</dbReference>
<dbReference type="InterPro" id="IPR001202">
    <property type="entry name" value="WW_dom"/>
</dbReference>
<dbReference type="PANTHER" id="PTHR14149">
    <property type="entry name" value="RAS GTPASE-ACTIVATING PROTEIN WITH IQ MOTIF"/>
    <property type="match status" value="1"/>
</dbReference>
<dbReference type="PANTHER" id="PTHR14149:SF15">
    <property type="entry name" value="RAS GTPASE-ACTIVATING-LIKE PROTEIN IQGAP1"/>
    <property type="match status" value="1"/>
</dbReference>
<dbReference type="Pfam" id="PF00307">
    <property type="entry name" value="CH"/>
    <property type="match status" value="1"/>
</dbReference>
<dbReference type="Pfam" id="PF00612">
    <property type="entry name" value="IQ"/>
    <property type="match status" value="4"/>
</dbReference>
<dbReference type="Pfam" id="PF00616">
    <property type="entry name" value="RasGAP"/>
    <property type="match status" value="1"/>
</dbReference>
<dbReference type="Pfam" id="PF03836">
    <property type="entry name" value="RasGAP_C"/>
    <property type="match status" value="1"/>
</dbReference>
<dbReference type="SMART" id="SM00033">
    <property type="entry name" value="CH"/>
    <property type="match status" value="1"/>
</dbReference>
<dbReference type="SMART" id="SM00015">
    <property type="entry name" value="IQ"/>
    <property type="match status" value="4"/>
</dbReference>
<dbReference type="SMART" id="SM00323">
    <property type="entry name" value="RasGAP"/>
    <property type="match status" value="1"/>
</dbReference>
<dbReference type="SUPFAM" id="SSF47576">
    <property type="entry name" value="Calponin-homology domain, CH-domain"/>
    <property type="match status" value="1"/>
</dbReference>
<dbReference type="SUPFAM" id="SSF48350">
    <property type="entry name" value="GTPase activation domain, GAP"/>
    <property type="match status" value="1"/>
</dbReference>
<dbReference type="SUPFAM" id="SSF52540">
    <property type="entry name" value="P-loop containing nucleoside triphosphate hydrolases"/>
    <property type="match status" value="1"/>
</dbReference>
<dbReference type="SUPFAM" id="SSF143885">
    <property type="entry name" value="RGC domain-like"/>
    <property type="match status" value="1"/>
</dbReference>
<dbReference type="PROSITE" id="PS50021">
    <property type="entry name" value="CH"/>
    <property type="match status" value="1"/>
</dbReference>
<dbReference type="PROSITE" id="PS50096">
    <property type="entry name" value="IQ"/>
    <property type="match status" value="4"/>
</dbReference>
<dbReference type="PROSITE" id="PS00509">
    <property type="entry name" value="RAS_GTPASE_ACTIV_1"/>
    <property type="match status" value="1"/>
</dbReference>
<dbReference type="PROSITE" id="PS50018">
    <property type="entry name" value="RAS_GTPASE_ACTIV_2"/>
    <property type="match status" value="1"/>
</dbReference>
<dbReference type="PROSITE" id="PS01159">
    <property type="entry name" value="WW_DOMAIN_1"/>
    <property type="match status" value="1"/>
</dbReference>
<reference key="1">
    <citation type="submission" date="2000-03" db="EMBL/GenBank/DDBJ databases">
        <title>Sequence of Mus musculus Cdc42 effector protein IQGAP1.</title>
        <authorList>
            <person name="Bernards A."/>
        </authorList>
    </citation>
    <scope>NUCLEOTIDE SEQUENCE [MRNA]</scope>
    <source>
        <tissue>Pre-B cell</tissue>
    </source>
</reference>
<reference key="2">
    <citation type="journal article" date="2009" name="PLoS Biol.">
        <title>Lineage-specific biology revealed by a finished genome assembly of the mouse.</title>
        <authorList>
            <person name="Church D.M."/>
            <person name="Goodstadt L."/>
            <person name="Hillier L.W."/>
            <person name="Zody M.C."/>
            <person name="Goldstein S."/>
            <person name="She X."/>
            <person name="Bult C.J."/>
            <person name="Agarwala R."/>
            <person name="Cherry J.L."/>
            <person name="DiCuccio M."/>
            <person name="Hlavina W."/>
            <person name="Kapustin Y."/>
            <person name="Meric P."/>
            <person name="Maglott D."/>
            <person name="Birtle Z."/>
            <person name="Marques A.C."/>
            <person name="Graves T."/>
            <person name="Zhou S."/>
            <person name="Teague B."/>
            <person name="Potamousis K."/>
            <person name="Churas C."/>
            <person name="Place M."/>
            <person name="Herschleb J."/>
            <person name="Runnheim R."/>
            <person name="Forrest D."/>
            <person name="Amos-Landgraf J."/>
            <person name="Schwartz D.C."/>
            <person name="Cheng Z."/>
            <person name="Lindblad-Toh K."/>
            <person name="Eichler E.E."/>
            <person name="Ponting C.P."/>
        </authorList>
    </citation>
    <scope>NUCLEOTIDE SEQUENCE [LARGE SCALE GENOMIC DNA]</scope>
    <source>
        <strain>C57BL/6J</strain>
    </source>
</reference>
<reference key="3">
    <citation type="submission" date="2005-07" db="EMBL/GenBank/DDBJ databases">
        <authorList>
            <person name="Mural R.J."/>
            <person name="Adams M.D."/>
            <person name="Myers E.W."/>
            <person name="Smith H.O."/>
            <person name="Venter J.C."/>
        </authorList>
    </citation>
    <scope>NUCLEOTIDE SEQUENCE [LARGE SCALE GENOMIC DNA]</scope>
</reference>
<reference key="4">
    <citation type="journal article" date="2005" name="Nat. Biotechnol.">
        <title>Immunoaffinity profiling of tyrosine phosphorylation in cancer cells.</title>
        <authorList>
            <person name="Rush J."/>
            <person name="Moritz A."/>
            <person name="Lee K.A."/>
            <person name="Guo A."/>
            <person name="Goss V.L."/>
            <person name="Spek E.J."/>
            <person name="Zhang H."/>
            <person name="Zha X.-M."/>
            <person name="Polakiewicz R.D."/>
            <person name="Comb M.J."/>
        </authorList>
    </citation>
    <scope>PHOSPHORYLATION [LARGE SCALE ANALYSIS] AT TYR-172</scope>
    <scope>IDENTIFICATION BY MASS SPECTROMETRY [LARGE SCALE ANALYSIS]</scope>
</reference>
<reference key="5">
    <citation type="journal article" date="2006" name="J. Biol. Chem.">
        <title>Identification of a DOCK180-related guanine nucleotide exchange factor that is capable of mediating a positive feedback activation of Cdc42.</title>
        <authorList>
            <person name="Lin Q."/>
            <person name="Yang W."/>
            <person name="Baird D."/>
            <person name="Feng Q."/>
            <person name="Cerione R.A."/>
        </authorList>
    </citation>
    <scope>INTERACTION WITH CDC42</scope>
</reference>
<reference key="6">
    <citation type="journal article" date="2009" name="PLoS Pathog.">
        <title>The Salmonella SPI2 effector SseI mediates long-term systemic infection by modulating host cell migration.</title>
        <authorList>
            <person name="McLaughlin L.M."/>
            <person name="Govoni G.R."/>
            <person name="Gerke C."/>
            <person name="Gopinath S."/>
            <person name="Peng K."/>
            <person name="Laidlaw G."/>
            <person name="Chien Y.H."/>
            <person name="Jeong H.W."/>
            <person name="Li Z."/>
            <person name="Brown M.D."/>
            <person name="Sacks D.B."/>
            <person name="Monack D."/>
        </authorList>
    </citation>
    <scope>INTERACTION WITH S.TYPHIMURIUM SSEI (MICROBIAL INFECTION)</scope>
</reference>
<reference key="7">
    <citation type="journal article" date="2010" name="Cell">
        <title>A tissue-specific atlas of mouse protein phosphorylation and expression.</title>
        <authorList>
            <person name="Huttlin E.L."/>
            <person name="Jedrychowski M.P."/>
            <person name="Elias J.E."/>
            <person name="Goswami T."/>
            <person name="Rad R."/>
            <person name="Beausoleil S.A."/>
            <person name="Villen J."/>
            <person name="Haas W."/>
            <person name="Sowa M.E."/>
            <person name="Gygi S.P."/>
        </authorList>
    </citation>
    <scope>IDENTIFICATION BY MASS SPECTROMETRY [LARGE SCALE ANALYSIS]</scope>
    <source>
        <tissue>Brain</tissue>
        <tissue>Brown adipose tissue</tissue>
        <tissue>Heart</tissue>
        <tissue>Kidney</tissue>
        <tissue>Liver</tissue>
        <tissue>Lung</tissue>
        <tissue>Pancreas</tissue>
        <tissue>Spleen</tissue>
        <tissue>Testis</tissue>
    </source>
</reference>
<reference key="8">
    <citation type="journal article" date="2010" name="Dev. Cell">
        <title>Integrin-linked kinase controls microtubule dynamics required for plasma membrane targeting of caveolae.</title>
        <authorList>
            <person name="Wickstroem S.A."/>
            <person name="Lange A."/>
            <person name="Hess M.W."/>
            <person name="Polleux J."/>
            <person name="Spatz J.P."/>
            <person name="Krueger M."/>
            <person name="Pfaller K."/>
            <person name="Lambacher A."/>
            <person name="Bloch W."/>
            <person name="Mann M."/>
            <person name="Huber L.A."/>
            <person name="Faessler R."/>
        </authorList>
    </citation>
    <scope>FUNCTION</scope>
    <scope>INTERACTION WITH ILK</scope>
    <scope>SUBCELLULAR LOCATION</scope>
</reference>
<reference key="9">
    <citation type="journal article" date="2011" name="Int. J. Biochem. Cell Biol.">
        <title>IQGAP1 translocates to the nucleus in early S-phase and contributes to cell cycle progression after DNA replication arrest.</title>
        <authorList>
            <person name="Johnson M."/>
            <person name="Sharma M."/>
            <person name="Brocardo M.G."/>
            <person name="Henderson B.R."/>
        </authorList>
    </citation>
    <scope>SUBCELLULAR LOCATION</scope>
    <scope>DEVELOPMENTAL STAGE</scope>
</reference>
<reference key="10">
    <citation type="journal article" date="2017" name="Neuroscience">
        <title>Conditional deletion of pejvakin in adult outer hair cells causes progressive hearing loss in mice.</title>
        <authorList>
            <person name="Harris S.L."/>
            <person name="Kazmierczak M."/>
            <person name="Pangrsic T."/>
            <person name="Shah P."/>
            <person name="Chuchvara N."/>
            <person name="Barrantes-Freer A."/>
            <person name="Moser T."/>
            <person name="Schwander M."/>
        </authorList>
    </citation>
    <scope>INTERACTION WITH PJVK</scope>
</reference>
<reference key="11">
    <citation type="journal article" date="2022" name="Front. Mol. Biosci.">
        <title>Identification of IQGAP1 as a SLC26A4 (Pendrin)-Binding Protein in the Kidney.</title>
        <authorList>
            <person name="Xu J."/>
            <person name="Barone S."/>
            <person name="Varasteh Kia M."/>
            <person name="Holliday L.S."/>
            <person name="Zahedi K."/>
            <person name="Soleimani M."/>
        </authorList>
    </citation>
    <scope>SUBCELLULAR LOCATION</scope>
    <scope>TISSUE SPECIFICITY</scope>
    <scope>INTERACTION WITH SLC26A4</scope>
</reference>
<reference key="12">
    <citation type="journal article" date="2023" name="Nat. Commun.">
        <title>SVEP1 is an endogenous ligand for the orphan receptor PEAR1.</title>
        <authorList>
            <person name="Elenbaas J.S."/>
            <person name="Pudupakkam U."/>
            <person name="Ashworth K.J."/>
            <person name="Kang C.J."/>
            <person name="Patel V."/>
            <person name="Santana K."/>
            <person name="Jung I.H."/>
            <person name="Lee P.C."/>
            <person name="Burks K.H."/>
            <person name="Amrute J.M."/>
            <person name="Mecham R.P."/>
            <person name="Halabi C.M."/>
            <person name="Alisio A."/>
            <person name="Di Paola J."/>
            <person name="Stitziel N.O."/>
        </authorList>
    </citation>
    <scope>INTERACTION WITH SVEP1</scope>
</reference>
<gene>
    <name type="primary">Iqgap1</name>
</gene>
<sequence>MSAAEEVDGLGVVRPHYGSVLDNERLTAEEMDERRRQNVAYEYLCHLEEAKRWMEACLGEDLPPTTELEEGLRNGVYLAKLGNFFSPKVVSLKKIYDREQTRYKATGLHFRHTDNVIQWLNAMDEIGLPKIFYPETTDIYDRKNMPRCIYCIHALSLYLFKLGLAPQIQDLYGKVDFTEEEINNMKIELEKYGIQMPAFSKIGGILANELSVDEAALHAAVIAINEAIDRRVAADTFTALKNPNAMLVNLEEGLAPTYQDVLYQAKQDKMTNAKNRTENSDRERDVYEELLTQAEIQGNVNKVNTSSALANISLALEQGCAVTLLKALQSLALGLRGLQTQNSDWYMKQLQSDLQQKRQSGQTDPLQKEEVQAGVDAANSAAQQYQRRLAAVAAINAAIQKGIAEKTVLELMNPEAQLPQVYPFAADLYQKELATLQQQSPEHSLTHPELTVAVEMLSSVALINRALESGDMTTVWKQLSSSVTGLTNIEEENCQRYLDELMKLKAQAHAENNAFITWNDIQACVDHVNLVVHEEHERILAIGLINEALDEGDAQKTLQALQIPAAKLEGVLAEVAQHYQDTLIRAKREKAQETQDESAVLWLDEIQGGIWQSNKDTQEAQRFALGISAINEAVDSGDVGRTLSALRSPDVGLYGVIPECGETYQSDLAEAKKKRLAAGDNNSKWVKHWVKGGYHYYHNLETQAGGWAEPPDFVQNSVQLSREEIQSSISGVTAAYNREQLWLANEGLITKLQACCRGYLVRQEFRSRMNFLKKQIPAITCIQSQWRGYKQKKAYQDRLAYLHSHKDEVVKIQSLARMHQARKRYRDRLQYFRDHINDIIKIQAFIRANKARDDYKTLINAEDPPMIVVRKFVHLLDQSDQDFQEELDLMKMREEVITLIRSNQQLENDLNLMDIKIGLLVKNKITLQDVVSHSKKLTKKNKEQLSDMMMINKQKGGLKALSKEKREKLEAYQHLFYLLQTNPTYLAKLIFQMPQNKSTKFMDSVIFTLYNYASNQREEYLLLRLFQTALQEEIKSKVDQIQEIVTGNPTVIKMVVSFNRGARGQNALRQILAPVVKEIMDDKSLNIKTDPVDIYKSWVNQMESQTGEASKLPYDVTPEQALSHEEVKTRLDNSIRNMRAVTDKFLSAIVSSVDKIPYGMRFIAKVLKDSLHEKFPDAGEDELLKIIGNLLYYRYMNPAIVAPDAFDIIDLSAGGQLTTDQRRNLGSIAKMLQHAASNKMFLGDNAHLSIINEYLSQSYQKFRRFFQVACDVPELQDKFNVDEYSDLVTLTKPVIYISIGEIINTHTLLLDHQDAIAPEHNDPIHELLDDLGEVPTIESLIGESCGNSNDPNKEALAKTEVSLTLTNKFDVPGDENAEMDARTILLNTKRLIVDVIRFQPGETLTEILETPATNEQEAEHQRAMQRRAIRDAKTPDKMKKSKPMKEDNNLSLQEKKEKIQTGLKKLTELGTVDPKNRYQELINDIAKDIRNQRRYRQRRKAELVKLQQTYSALNSKATFYGEQVDYYKSYIKTCLDNLASKGKVSKKPREMKGKKSKKISLKYTAARLHEKGVLLEIEDLQANQFKNVIFEIGPTEEVGDFEVKAKFMGVQMETFMLHYQDLLQLQYEGVAVMKLFDRAKVNVNLLIFLLNKKFYGK</sequence>
<proteinExistence type="evidence at protein level"/>
<protein>
    <recommendedName>
        <fullName>Ras GTPase-activating-like protein IQGAP1</fullName>
    </recommendedName>
</protein>
<name>IQGA1_MOUSE</name>
<comment type="function">
    <text evidence="1 5 8">Plays a crucial role in regulating the dynamics and assembly of the actin cytoskeleton. Recruited to the cell cortex by interaction with ILK which allows it to cooperate with its effector DIAPH1 to locally stabilize microtubules and allow stable insertion of caveolae into the plasma membrane (PubMed:20951348). Binds to activated CDC42 but does not stimulate its GTPase activity (PubMed:16968698). Associates with calmodulin. May promote neurite outgrowth. May play a possible role in cell cycle regulation by contributing to cell cycle progression after DNA replication arrest.</text>
</comment>
<comment type="subunit">
    <text evidence="1 5 8 9 10 11">Interacts with CDC42; the interaction is demonstrated with IQGAP1 in GTP-bound and in nucleotide-free state (PubMed:16968698). Interacts with RAC1 (By similarity). Does not interact with RHOA (By similarity). Interacts with TSG101 (By similarity). Interacts with PAK6 (By similarity). Interacts with SASH1 (By similarity). Interacts with PJVK (PubMed:28089576). Interacts with SLC26A4 (PubMed:35601831). This interaction enhances the chloride-bicarbonate exchange activity of SLC26A4 (By similarity). Interacts with SVEP1 (PubMed:36792666). Interacts with ILK; the interaction is required for localization of IQGAP to the cell cortex (PubMed:20951348).</text>
</comment>
<comment type="subunit">
    <text evidence="6">(Microbial infection) In case of infection, interacts with S.typhimurium protein sseI (PubMed:19956712).</text>
</comment>
<comment type="interaction">
    <interactant intactId="EBI-644633">
        <id>Q9JKF1</id>
    </interactant>
    <interactant intactId="EBI-300201">
        <id>P98083</id>
        <label>Shc1</label>
    </interactant>
    <organismsDiffer>false</organismsDiffer>
    <experiments>5</experiments>
</comment>
<comment type="interaction">
    <interactant intactId="EBI-644633">
        <id>Q9JKF1</id>
    </interactant>
    <interactant intactId="EBI-935477">
        <id>P03332</id>
        <label>gag</label>
    </interactant>
    <organismsDiffer>true</organismsDiffer>
    <experiments>17</experiments>
</comment>
<comment type="subcellular location">
    <subcellularLocation>
        <location evidence="1">Cell membrane</location>
    </subcellularLocation>
    <subcellularLocation>
        <location evidence="7">Nucleus</location>
    </subcellularLocation>
    <subcellularLocation>
        <location evidence="7">Cytoplasm</location>
    </subcellularLocation>
    <subcellularLocation>
        <location evidence="8">Cytoplasm</location>
        <location evidence="8">Cell cortex</location>
    </subcellularLocation>
    <subcellularLocation>
        <location evidence="10">Apical cell membrane</location>
    </subcellularLocation>
    <subcellularLocation>
        <location evidence="10">Basolateral cell membrane</location>
    </subcellularLocation>
    <text>Subcellular distribution is regulated by the cell cycle, nuclear levels increase at G1/S phase (PubMed:20883816).</text>
</comment>
<comment type="tissue specificity">
    <text evidence="10">Expressed in the kidney (at protein level).</text>
</comment>
<comment type="developmental stage">
    <text evidence="7">Expressed widely in developing cortex.</text>
</comment>
<comment type="domain">
    <text evidence="1">Regions C1 and C2 can either interact with nucleotide-free CDC42, or interact together.</text>
</comment>